<dbReference type="EMBL" id="AM946015">
    <property type="protein sequence ID" value="CAR43777.1"/>
    <property type="molecule type" value="Genomic_DNA"/>
</dbReference>
<dbReference type="RefSeq" id="WP_015912073.1">
    <property type="nucleotide sequence ID" value="NC_012004.1"/>
</dbReference>
<dbReference type="SMR" id="B9DW70"/>
<dbReference type="STRING" id="218495.SUB1783"/>
<dbReference type="KEGG" id="sub:SUB1783"/>
<dbReference type="eggNOG" id="COG0323">
    <property type="taxonomic scope" value="Bacteria"/>
</dbReference>
<dbReference type="HOGENOM" id="CLU_004131_4_1_9"/>
<dbReference type="OrthoDB" id="9763467at2"/>
<dbReference type="Proteomes" id="UP000000449">
    <property type="component" value="Chromosome"/>
</dbReference>
<dbReference type="GO" id="GO:0032300">
    <property type="term" value="C:mismatch repair complex"/>
    <property type="evidence" value="ECO:0007669"/>
    <property type="project" value="InterPro"/>
</dbReference>
<dbReference type="GO" id="GO:0005524">
    <property type="term" value="F:ATP binding"/>
    <property type="evidence" value="ECO:0007669"/>
    <property type="project" value="InterPro"/>
</dbReference>
<dbReference type="GO" id="GO:0016887">
    <property type="term" value="F:ATP hydrolysis activity"/>
    <property type="evidence" value="ECO:0007669"/>
    <property type="project" value="InterPro"/>
</dbReference>
<dbReference type="GO" id="GO:0140664">
    <property type="term" value="F:ATP-dependent DNA damage sensor activity"/>
    <property type="evidence" value="ECO:0007669"/>
    <property type="project" value="InterPro"/>
</dbReference>
<dbReference type="GO" id="GO:0030983">
    <property type="term" value="F:mismatched DNA binding"/>
    <property type="evidence" value="ECO:0007669"/>
    <property type="project" value="InterPro"/>
</dbReference>
<dbReference type="GO" id="GO:0006298">
    <property type="term" value="P:mismatch repair"/>
    <property type="evidence" value="ECO:0007669"/>
    <property type="project" value="UniProtKB-UniRule"/>
</dbReference>
<dbReference type="CDD" id="cd16926">
    <property type="entry name" value="HATPase_MutL-MLH-PMS-like"/>
    <property type="match status" value="1"/>
</dbReference>
<dbReference type="CDD" id="cd00782">
    <property type="entry name" value="MutL_Trans"/>
    <property type="match status" value="1"/>
</dbReference>
<dbReference type="FunFam" id="3.30.1370.100:FF:000004">
    <property type="entry name" value="DNA mismatch repair endonuclease MutL"/>
    <property type="match status" value="1"/>
</dbReference>
<dbReference type="FunFam" id="3.30.565.10:FF:000003">
    <property type="entry name" value="DNA mismatch repair endonuclease MutL"/>
    <property type="match status" value="1"/>
</dbReference>
<dbReference type="Gene3D" id="3.30.230.10">
    <property type="match status" value="1"/>
</dbReference>
<dbReference type="Gene3D" id="3.30.565.10">
    <property type="entry name" value="Histidine kinase-like ATPase, C-terminal domain"/>
    <property type="match status" value="1"/>
</dbReference>
<dbReference type="Gene3D" id="3.30.1540.20">
    <property type="entry name" value="MutL, C-terminal domain, dimerisation subdomain"/>
    <property type="match status" value="1"/>
</dbReference>
<dbReference type="Gene3D" id="3.30.1370.100">
    <property type="entry name" value="MutL, C-terminal domain, regulatory subdomain"/>
    <property type="match status" value="1"/>
</dbReference>
<dbReference type="HAMAP" id="MF_00149">
    <property type="entry name" value="DNA_mis_repair"/>
    <property type="match status" value="1"/>
</dbReference>
<dbReference type="InterPro" id="IPR014762">
    <property type="entry name" value="DNA_mismatch_repair_CS"/>
</dbReference>
<dbReference type="InterPro" id="IPR020667">
    <property type="entry name" value="DNA_mismatch_repair_MutL"/>
</dbReference>
<dbReference type="InterPro" id="IPR013507">
    <property type="entry name" value="DNA_mismatch_S5_2-like"/>
</dbReference>
<dbReference type="InterPro" id="IPR036890">
    <property type="entry name" value="HATPase_C_sf"/>
</dbReference>
<dbReference type="InterPro" id="IPR002099">
    <property type="entry name" value="MutL/Mlh/PMS"/>
</dbReference>
<dbReference type="InterPro" id="IPR038973">
    <property type="entry name" value="MutL/Mlh/Pms-like"/>
</dbReference>
<dbReference type="InterPro" id="IPR014790">
    <property type="entry name" value="MutL_C"/>
</dbReference>
<dbReference type="InterPro" id="IPR042120">
    <property type="entry name" value="MutL_C_dimsub"/>
</dbReference>
<dbReference type="InterPro" id="IPR042121">
    <property type="entry name" value="MutL_C_regsub"/>
</dbReference>
<dbReference type="InterPro" id="IPR037198">
    <property type="entry name" value="MutL_C_sf"/>
</dbReference>
<dbReference type="InterPro" id="IPR020568">
    <property type="entry name" value="Ribosomal_Su5_D2-typ_SF"/>
</dbReference>
<dbReference type="InterPro" id="IPR014721">
    <property type="entry name" value="Ribsml_uS5_D2-typ_fold_subgr"/>
</dbReference>
<dbReference type="NCBIfam" id="TIGR00585">
    <property type="entry name" value="mutl"/>
    <property type="match status" value="1"/>
</dbReference>
<dbReference type="NCBIfam" id="NF000950">
    <property type="entry name" value="PRK00095.1-3"/>
    <property type="match status" value="1"/>
</dbReference>
<dbReference type="PANTHER" id="PTHR10073">
    <property type="entry name" value="DNA MISMATCH REPAIR PROTEIN MLH, PMS, MUTL"/>
    <property type="match status" value="1"/>
</dbReference>
<dbReference type="PANTHER" id="PTHR10073:SF12">
    <property type="entry name" value="DNA MISMATCH REPAIR PROTEIN MLH1"/>
    <property type="match status" value="1"/>
</dbReference>
<dbReference type="Pfam" id="PF01119">
    <property type="entry name" value="DNA_mis_repair"/>
    <property type="match status" value="1"/>
</dbReference>
<dbReference type="Pfam" id="PF13589">
    <property type="entry name" value="HATPase_c_3"/>
    <property type="match status" value="1"/>
</dbReference>
<dbReference type="Pfam" id="PF08676">
    <property type="entry name" value="MutL_C"/>
    <property type="match status" value="1"/>
</dbReference>
<dbReference type="SMART" id="SM01340">
    <property type="entry name" value="DNA_mis_repair"/>
    <property type="match status" value="1"/>
</dbReference>
<dbReference type="SMART" id="SM00853">
    <property type="entry name" value="MutL_C"/>
    <property type="match status" value="1"/>
</dbReference>
<dbReference type="SUPFAM" id="SSF55874">
    <property type="entry name" value="ATPase domain of HSP90 chaperone/DNA topoisomerase II/histidine kinase"/>
    <property type="match status" value="1"/>
</dbReference>
<dbReference type="SUPFAM" id="SSF118116">
    <property type="entry name" value="DNA mismatch repair protein MutL"/>
    <property type="match status" value="1"/>
</dbReference>
<dbReference type="SUPFAM" id="SSF54211">
    <property type="entry name" value="Ribosomal protein S5 domain 2-like"/>
    <property type="match status" value="1"/>
</dbReference>
<dbReference type="PROSITE" id="PS00058">
    <property type="entry name" value="DNA_MISMATCH_REPAIR_1"/>
    <property type="match status" value="1"/>
</dbReference>
<feature type="chain" id="PRO_1000123218" description="DNA mismatch repair protein MutL">
    <location>
        <begin position="1"/>
        <end position="660"/>
    </location>
</feature>
<feature type="region of interest" description="Disordered" evidence="2">
    <location>
        <begin position="408"/>
        <end position="436"/>
    </location>
</feature>
<feature type="compositionally biased region" description="Polar residues" evidence="2">
    <location>
        <begin position="425"/>
        <end position="436"/>
    </location>
</feature>
<gene>
    <name evidence="1" type="primary">mutL</name>
    <name type="ordered locus">SUB1783</name>
</gene>
<keyword id="KW-0227">DNA damage</keyword>
<keyword id="KW-0234">DNA repair</keyword>
<keyword id="KW-1185">Reference proteome</keyword>
<name>MUTL_STRU0</name>
<protein>
    <recommendedName>
        <fullName evidence="1">DNA mismatch repair protein MutL</fullName>
    </recommendedName>
</protein>
<proteinExistence type="inferred from homology"/>
<sequence>MSKIIELPEILANQIAAGEVIERPASVVKELVENAIDANSRQITIEIEESGLKSIKITDNGEGMSEENLPLSILRHATSKIKNQSDLFRIRTLGFRGEALPSIASISELRIETSTADSPYGSLLVAKGGQIERQEVISTPVGTKITVENLFYNTPARLKYMKSLQSELAHIVDVVNRLSLGHPEVSFTLICDGREMTKTSGTGDLKQAIAGIYGLNTAKKMIEISNADLDFEVSGYVSLPELTRANRNYITILINGRYIKNFLLNRAILDGYGSKLMVGRFPIVVIDIQIDPYLADVNVHPTKQEVRISKEKELMALISTAIAESLKSQDLIPDALENLAKSTVRSSTKYEQTKLPLQSSKLYFDPQKNDFYIKEPQKTTELTVSEESPNFTLYTNIDNTVKEDRNLDQTSASASVKHASRSQDENQLSEHPNLDFTNKQKMEQLISKLENEKTSTFPELDFFGQMHGTYLFAQGKDGLFIIDQHAAQERVKYEYYRDKIGKVDTSLQQLLVPYLFEFSGADFIQLQEKMSFLNEVGIFLEPYGMNTFILREHPIWMKESEIESGVYEMCDMLLLTNQVSIKTYRAELAIMMSCKRSIKANHALDDYSARHLLEQLSQCQNPYNCPHGRPVLVHFTKADMEKMFRRIQENHTSLRDLGKY</sequence>
<organism>
    <name type="scientific">Streptococcus uberis (strain ATCC BAA-854 / 0140J)</name>
    <dbReference type="NCBI Taxonomy" id="218495"/>
    <lineage>
        <taxon>Bacteria</taxon>
        <taxon>Bacillati</taxon>
        <taxon>Bacillota</taxon>
        <taxon>Bacilli</taxon>
        <taxon>Lactobacillales</taxon>
        <taxon>Streptococcaceae</taxon>
        <taxon>Streptococcus</taxon>
    </lineage>
</organism>
<accession>B9DW70</accession>
<comment type="function">
    <text evidence="1">This protein is involved in the repair of mismatches in DNA. It is required for dam-dependent methyl-directed DNA mismatch repair. May act as a 'molecular matchmaker', a protein that promotes the formation of a stable complex between two or more DNA-binding proteins in an ATP-dependent manner without itself being part of a final effector complex.</text>
</comment>
<comment type="similarity">
    <text evidence="1">Belongs to the DNA mismatch repair MutL/HexB family.</text>
</comment>
<reference key="1">
    <citation type="journal article" date="2009" name="BMC Genomics">
        <title>Evidence for niche adaptation in the genome of the bovine pathogen Streptococcus uberis.</title>
        <authorList>
            <person name="Ward P.N."/>
            <person name="Holden M.T.G."/>
            <person name="Leigh J.A."/>
            <person name="Lennard N."/>
            <person name="Bignell A."/>
            <person name="Barron A."/>
            <person name="Clark L."/>
            <person name="Quail M.A."/>
            <person name="Woodward J."/>
            <person name="Barrell B.G."/>
            <person name="Egan S.A."/>
            <person name="Field T.R."/>
            <person name="Maskell D."/>
            <person name="Kehoe M."/>
            <person name="Dowson C.G."/>
            <person name="Chanter N."/>
            <person name="Whatmore A.M."/>
            <person name="Bentley S.D."/>
            <person name="Parkhill J."/>
        </authorList>
    </citation>
    <scope>NUCLEOTIDE SEQUENCE [LARGE SCALE GENOMIC DNA]</scope>
    <source>
        <strain>ATCC BAA-854 / 0140J</strain>
    </source>
</reference>
<evidence type="ECO:0000255" key="1">
    <source>
        <dbReference type="HAMAP-Rule" id="MF_00149"/>
    </source>
</evidence>
<evidence type="ECO:0000256" key="2">
    <source>
        <dbReference type="SAM" id="MobiDB-lite"/>
    </source>
</evidence>